<organism>
    <name type="scientific">Macaca fascicularis</name>
    <name type="common">Crab-eating macaque</name>
    <name type="synonym">Cynomolgus monkey</name>
    <dbReference type="NCBI Taxonomy" id="9541"/>
    <lineage>
        <taxon>Eukaryota</taxon>
        <taxon>Metazoa</taxon>
        <taxon>Chordata</taxon>
        <taxon>Craniata</taxon>
        <taxon>Vertebrata</taxon>
        <taxon>Euteleostomi</taxon>
        <taxon>Mammalia</taxon>
        <taxon>Eutheria</taxon>
        <taxon>Euarchontoglires</taxon>
        <taxon>Primates</taxon>
        <taxon>Haplorrhini</taxon>
        <taxon>Catarrhini</taxon>
        <taxon>Cercopithecidae</taxon>
        <taxon>Cercopithecinae</taxon>
        <taxon>Macaca</taxon>
    </lineage>
</organism>
<comment type="function">
    <text evidence="1">Deubiquitinase with endodeubiquitinase activity that specifically interacts with and cleaves 'Lys-63'-linked long polyubiquitin chains. Shows only weak activity against 'Lys-11' and 'Lys-48'-linked chains. Plays an important role in genome stability pathways, functioning to prevent spontaneous DNA damage and also promote cellular survival in response to exogenous DNA damage. Modulates the ubiquitination status of replication protein A (RPA) complex proteins in response to replication stress.</text>
</comment>
<comment type="catalytic activity">
    <reaction evidence="1">
        <text>Thiol-dependent hydrolysis of ester, thioester, amide, peptide and isopeptide bonds formed by the C-terminal Gly of ubiquitin (a 76-residue protein attached to proteins as an intracellular targeting signal).</text>
        <dbReference type="EC" id="3.4.19.12"/>
    </reaction>
</comment>
<comment type="subunit">
    <text evidence="1">Interacts with RPA1 and RPA2.</text>
</comment>
<comment type="subcellular location">
    <subcellularLocation>
        <location evidence="1">Cytoplasm</location>
    </subcellularLocation>
    <subcellularLocation>
        <location evidence="1">Nucleus</location>
    </subcellularLocation>
    <text evidence="1">Mostly present in the nuclear fraction. Localizes to DNA lesions.</text>
</comment>
<comment type="domain">
    <text evidence="1">The motif interacting with ubiquitin (MIU) and ZUFSP ubiquitin-binding domain (zUBD, also called ZUFSP helical arm ZHA) are responsible for binding the distal (outgoing) ubiquitin units S1 and S2 respectively.</text>
</comment>
<comment type="domain">
    <text evidence="1">C2H2-type zinc finger 4 is a ubiquitin-binding zinc finger (UBZ) and required for polyubiquitin binding, possibly binding the proximal ubiqutin, and for catalytic activity. C2H2-type zinc fingers 1-3 are required for localization to sites of DNA damage.</text>
</comment>
<comment type="similarity">
    <text evidence="4">Belongs to the peptidase C78 family. ZUFSP subfamily.</text>
</comment>
<reference key="1">
    <citation type="submission" date="2005-06" db="EMBL/GenBank/DDBJ databases">
        <title>DNA sequences of macaque genes expressed in brain or testis and its evolutionary implications.</title>
        <authorList>
            <consortium name="International consortium for macaque cDNA sequencing and analysis"/>
        </authorList>
    </citation>
    <scope>NUCLEOTIDE SEQUENCE [LARGE SCALE MRNA]</scope>
    <source>
        <tissue>Testis</tissue>
    </source>
</reference>
<gene>
    <name evidence="1" type="primary">ZUP1</name>
    <name type="synonym">ZUFSP</name>
    <name type="ORF">QtsA-11462</name>
</gene>
<keyword id="KW-0007">Acetylation</keyword>
<keyword id="KW-0963">Cytoplasm</keyword>
<keyword id="KW-0378">Hydrolase</keyword>
<keyword id="KW-0479">Metal-binding</keyword>
<keyword id="KW-0539">Nucleus</keyword>
<keyword id="KW-1185">Reference proteome</keyword>
<keyword id="KW-0677">Repeat</keyword>
<keyword id="KW-0862">Zinc</keyword>
<keyword id="KW-0863">Zinc-finger</keyword>
<name>ZUP1_MACFA</name>
<evidence type="ECO:0000250" key="1">
    <source>
        <dbReference type="UniProtKB" id="Q96AP4"/>
    </source>
</evidence>
<evidence type="ECO:0000250" key="2">
    <source>
        <dbReference type="UniProtKB" id="Q99K23"/>
    </source>
</evidence>
<evidence type="ECO:0000255" key="3">
    <source>
        <dbReference type="PROSITE-ProRule" id="PRU00042"/>
    </source>
</evidence>
<evidence type="ECO:0000305" key="4"/>
<accession>Q4R4A2</accession>
<feature type="chain" id="PRO_0000244337" description="Zinc finger-containing ubiquitin peptidase 1">
    <location>
        <begin position="1"/>
        <end position="578"/>
    </location>
</feature>
<feature type="zinc finger region" description="C2H2-type 1" evidence="3">
    <location>
        <begin position="2"/>
        <end position="24"/>
    </location>
</feature>
<feature type="zinc finger region" description="C2H2-type 2; atypical" evidence="1">
    <location>
        <begin position="29"/>
        <end position="52"/>
    </location>
</feature>
<feature type="zinc finger region" description="C2H2-type 3" evidence="3">
    <location>
        <begin position="154"/>
        <end position="177"/>
    </location>
</feature>
<feature type="zinc finger region" description="C2H2-type 4" evidence="3">
    <location>
        <begin position="193"/>
        <end position="215"/>
    </location>
</feature>
<feature type="region of interest" description="MIU" evidence="1">
    <location>
        <begin position="226"/>
        <end position="248"/>
    </location>
</feature>
<feature type="region of interest" description="zUBD/ZHA" evidence="1">
    <location>
        <begin position="249"/>
        <end position="274"/>
    </location>
</feature>
<feature type="active site" description="Nucleophile" evidence="1">
    <location>
        <position position="360"/>
    </location>
</feature>
<feature type="active site" description="Proton acceptor" evidence="1">
    <location>
        <position position="491"/>
    </location>
</feature>
<feature type="active site" evidence="2">
    <location>
        <position position="512"/>
    </location>
</feature>
<feature type="site" description="Involved in the stabilization of negative charge on the oxyanion by the formation of the oxyanion hole" evidence="1">
    <location>
        <position position="487"/>
    </location>
</feature>
<feature type="modified residue" description="N6-acetyllysine" evidence="1">
    <location>
        <position position="262"/>
    </location>
</feature>
<dbReference type="EC" id="3.4.19.12" evidence="1"/>
<dbReference type="EMBL" id="AB179013">
    <property type="protein sequence ID" value="BAE02064.1"/>
    <property type="molecule type" value="mRNA"/>
</dbReference>
<dbReference type="RefSeq" id="NP_001272087.1">
    <property type="nucleotide sequence ID" value="NM_001285158.1"/>
</dbReference>
<dbReference type="SMR" id="Q4R4A2"/>
<dbReference type="STRING" id="9541.ENSMFAP00000008841"/>
<dbReference type="eggNOG" id="KOG4696">
    <property type="taxonomic scope" value="Eukaryota"/>
</dbReference>
<dbReference type="Proteomes" id="UP000233100">
    <property type="component" value="Unplaced"/>
</dbReference>
<dbReference type="GO" id="GO:0005737">
    <property type="term" value="C:cytoplasm"/>
    <property type="evidence" value="ECO:0007669"/>
    <property type="project" value="UniProtKB-SubCell"/>
</dbReference>
<dbReference type="GO" id="GO:0005634">
    <property type="term" value="C:nucleus"/>
    <property type="evidence" value="ECO:0007669"/>
    <property type="project" value="UniProtKB-SubCell"/>
</dbReference>
<dbReference type="GO" id="GO:0004843">
    <property type="term" value="F:cysteine-type deubiquitinase activity"/>
    <property type="evidence" value="ECO:0007669"/>
    <property type="project" value="UniProtKB-EC"/>
</dbReference>
<dbReference type="GO" id="GO:0008270">
    <property type="term" value="F:zinc ion binding"/>
    <property type="evidence" value="ECO:0007669"/>
    <property type="project" value="UniProtKB-KW"/>
</dbReference>
<dbReference type="FunFam" id="3.90.70.130:FF:000002">
    <property type="entry name" value="Zinc finger containing ubiquitin peptidase 1"/>
    <property type="match status" value="1"/>
</dbReference>
<dbReference type="Gene3D" id="3.90.70.130">
    <property type="match status" value="1"/>
</dbReference>
<dbReference type="Gene3D" id="3.30.160.60">
    <property type="entry name" value="Classic Zinc Finger"/>
    <property type="match status" value="2"/>
</dbReference>
<dbReference type="InterPro" id="IPR012462">
    <property type="entry name" value="UfSP1/2_DUB_cat"/>
</dbReference>
<dbReference type="InterPro" id="IPR050688">
    <property type="entry name" value="Zinc_finger/UBP_domain"/>
</dbReference>
<dbReference type="InterPro" id="IPR013087">
    <property type="entry name" value="Znf_C2H2_type"/>
</dbReference>
<dbReference type="PANTHER" id="PTHR24403">
    <property type="entry name" value="ZINC FINGER PROTEIN"/>
    <property type="match status" value="1"/>
</dbReference>
<dbReference type="PANTHER" id="PTHR24403:SF82">
    <property type="entry name" value="ZINC FINGER-CONTAINING UBIQUITIN PEPTIDASE 1"/>
    <property type="match status" value="1"/>
</dbReference>
<dbReference type="Pfam" id="PF07910">
    <property type="entry name" value="Peptidase_C78"/>
    <property type="match status" value="1"/>
</dbReference>
<dbReference type="SMART" id="SM00355">
    <property type="entry name" value="ZnF_C2H2"/>
    <property type="match status" value="4"/>
</dbReference>
<dbReference type="PROSITE" id="PS00028">
    <property type="entry name" value="ZINC_FINGER_C2H2_1"/>
    <property type="match status" value="2"/>
</dbReference>
<dbReference type="PROSITE" id="PS50157">
    <property type="entry name" value="ZINC_FINGER_C2H2_2"/>
    <property type="match status" value="1"/>
</dbReference>
<sequence>MLSCDICGETVTSEPDMKAHLIVHMENEIVCPFCKLSGVSYDEMCFHIETAHFEQNTLERNFERINTVQFGTSDNKKDNTLQCGMEVNSSILSGCASNHPKNSSQCLTKDSTLKHETFYSENLTESRKFLKSREKQSGLTEVKGSIYETTYGPPECPFCGKIEEHSEDMETHVKTTHANLLDISLEDCDQPLYDCPMCGLICTNYHILQEHVDLHLEENSFCQGMDRVQCSGDLQLAHQLQQEEDRKRRSEESRQEIEEFQKLQRQYGLDNSGGYKQQQLRNMEIEVNRGRMPPSEFHRRKADMMESLAIGIDDGKTKTSGIIEALHRYYQNAATDVRQVWLSSVVDHFHSSLGDKGWGCGYRNFQMLLSSLLQNDAYDDCLKGMSVPCIPKIQSMIEDAWKEGFDPQGASQLNNRLQGTKAWIGACEVYILLTSLRVKCHIVDFHKSTGPLGTHPRLFEWILNYYSSEGEGSPKVVCTSKPPIYLQHQGHSRTVIGIEEKKNRTLCLLIFDPGCPSREMQKLLKQDVEASSLKQLRKSMGNLKHKQYQIVAVEGALSPEEKVARRQDSQVFTAEKIP</sequence>
<proteinExistence type="evidence at transcript level"/>
<protein>
    <recommendedName>
        <fullName evidence="4">Zinc finger-containing ubiquitin peptidase 1</fullName>
        <ecNumber evidence="1">3.4.19.12</ecNumber>
    </recommendedName>
    <alternativeName>
        <fullName>Lys-63-specific deubiquitinase ZUFSP</fullName>
        <shortName>DUB</shortName>
    </alternativeName>
    <alternativeName>
        <fullName>Ubiquitin carboxyl-terminal hydrolase ZUFSP</fullName>
        <ecNumber>3.4.19.12</ecNumber>
    </alternativeName>
    <alternativeName>
        <fullName>Zinc finger with UFM1-specific peptidase domain protein</fullName>
    </alternativeName>
</protein>